<keyword id="KW-0963">Cytoplasm</keyword>
<keyword id="KW-0238">DNA-binding</keyword>
<keyword id="KW-0256">Endoplasmic reticulum</keyword>
<keyword id="KW-0446">Lipid-binding</keyword>
<keyword id="KW-0472">Membrane</keyword>
<keyword id="KW-0479">Metal-binding</keyword>
<keyword id="KW-0539">Nucleus</keyword>
<keyword id="KW-0597">Phosphoprotein</keyword>
<keyword id="KW-0675">Receptor</keyword>
<keyword id="KW-1185">Reference proteome</keyword>
<keyword id="KW-0754">Steroid-binding</keyword>
<keyword id="KW-0804">Transcription</keyword>
<keyword id="KW-0805">Transcription regulation</keyword>
<keyword id="KW-0862">Zinc</keyword>
<keyword id="KW-0863">Zinc-finger</keyword>
<organism>
    <name type="scientific">Aotus nancymaae</name>
    <name type="common">Ma's night monkey</name>
    <dbReference type="NCBI Taxonomy" id="37293"/>
    <lineage>
        <taxon>Eukaryota</taxon>
        <taxon>Metazoa</taxon>
        <taxon>Chordata</taxon>
        <taxon>Craniata</taxon>
        <taxon>Vertebrata</taxon>
        <taxon>Euteleostomi</taxon>
        <taxon>Mammalia</taxon>
        <taxon>Eutheria</taxon>
        <taxon>Euarchontoglires</taxon>
        <taxon>Primates</taxon>
        <taxon>Haplorrhini</taxon>
        <taxon>Platyrrhini</taxon>
        <taxon>Aotidae</taxon>
        <taxon>Aotus</taxon>
    </lineage>
</organism>
<protein>
    <recommendedName>
        <fullName>Mineralocorticoid receptor</fullName>
        <shortName>MR</shortName>
    </recommendedName>
    <alternativeName>
        <fullName>Nuclear receptor subfamily 3 group C member 2</fullName>
    </alternativeName>
</protein>
<name>MCR_AOTNA</name>
<sequence length="984" mass="107349">METKGYHSLPEGLDMERRWGQVSQTVEHSSLGSTERTDENNYMEIVNVSCVSGAIPNNSTQGSSKEKHELLPCLQQDNNRPGILTSDIKTELESKELSATVAESMGLYMDSVRDADYSYEQQNQQRSMSPAKIYQNVEQLVKFYKENGHRPSTLSCVNRPLRSFMSDSGSSVNGGVMRAIVKSPIMCHEKSPSVCSPLNMTSSVCSPAGINSVSSTTASFGSFPVHSPITQGTPLTCSPNVENRGSRSHSPAHASNVGSPLSSPLSSMKSSISSPPSHCSVKSPVSSPNNVTLRSSVSSPANINNSRCSVSSPSNTNNRSTLSSPAASTVGSICSPVNNAFSYTASGTSAGSSTSRDVVPSPDTQEKGAQEVLFPKTEEVESAISNGVTGQLNIVQYIKPEPDGAFSSSCLGGNSKINSDSPFSVPIKQESTKHSCSGTSFKGNPTVNPFPFMDGSYFSFMDDKDYYSLSGILGPPVPGFDGNCEGSGFPVGIKQEPDDGSYYPEASIPSSAIVGVNSGGQSFHYRIGAQGTISLSRSARDQSFQHLSSFPPVNTLVESWKSHGDLSSRRSDGYPVLEYIPENVSSSTLRSVSTGSSRPSKICLVCGDEASGCHYGVVTCGSCKVFFKRAVEGQHNYLCAGRNDCIIDKIRRKNCPACRLQKCLQAGMNLGARKSKKLGKLKGIHEEQPQQQQPPPPPPPPQSPEEGTTYIAPAKEPSVNTALVPQLSTISRALTPSPAMILENIEPEVVYAGYDNSKPDTAENLLSTLNRLAGKQMIQVVKWAKVLPGFKNLPLEDQITLIQYSWMCLSSFALSWRSYKHTNSQFLYFAPDLVFNEEKMHQSAMYELCQGMHQISLQFIRLQLTFEEYTIMKVLLLLSTVPKDGLKSQAAFEEMRTNYIKELRKMVTKCPNNSGQSWQRFYQLTKLLDSMHDLVNDLLEFCFYTFRESQALKVEFPAMLVEIISDQLPKVESGNAKPLYFHRK</sequence>
<feature type="chain" id="PRO_0000233102" description="Mineralocorticoid receptor">
    <location>
        <begin position="1"/>
        <end position="984"/>
    </location>
</feature>
<feature type="domain" description="NR LBD" evidence="5">
    <location>
        <begin position="726"/>
        <end position="964"/>
    </location>
</feature>
<feature type="DNA-binding region" description="Nuclear receptor" evidence="4">
    <location>
        <begin position="603"/>
        <end position="668"/>
    </location>
</feature>
<feature type="zinc finger region" description="NR C4-type" evidence="4">
    <location>
        <begin position="603"/>
        <end position="623"/>
    </location>
</feature>
<feature type="zinc finger region" description="NR C4-type" evidence="4">
    <location>
        <begin position="639"/>
        <end position="663"/>
    </location>
</feature>
<feature type="region of interest" description="Modulating">
    <location>
        <begin position="1"/>
        <end position="602"/>
    </location>
</feature>
<feature type="region of interest" description="Disordered" evidence="6">
    <location>
        <begin position="231"/>
        <end position="329"/>
    </location>
</feature>
<feature type="region of interest" description="Disordered" evidence="6">
    <location>
        <begin position="346"/>
        <end position="369"/>
    </location>
</feature>
<feature type="region of interest" description="Hinge">
    <location>
        <begin position="669"/>
        <end position="725"/>
    </location>
</feature>
<feature type="region of interest" description="Disordered" evidence="6">
    <location>
        <begin position="684"/>
        <end position="710"/>
    </location>
</feature>
<feature type="region of interest" description="Important for coactivator binding" evidence="1">
    <location>
        <begin position="782"/>
        <end position="785"/>
    </location>
</feature>
<feature type="compositionally biased region" description="Polar residues" evidence="6">
    <location>
        <begin position="231"/>
        <end position="243"/>
    </location>
</feature>
<feature type="compositionally biased region" description="Low complexity" evidence="6">
    <location>
        <begin position="259"/>
        <end position="291"/>
    </location>
</feature>
<feature type="compositionally biased region" description="Polar residues" evidence="6">
    <location>
        <begin position="292"/>
        <end position="329"/>
    </location>
</feature>
<feature type="compositionally biased region" description="Low complexity" evidence="6">
    <location>
        <begin position="346"/>
        <end position="355"/>
    </location>
</feature>
<feature type="compositionally biased region" description="Pro residues" evidence="6">
    <location>
        <begin position="692"/>
        <end position="703"/>
    </location>
</feature>
<feature type="binding site" evidence="2">
    <location>
        <position position="603"/>
    </location>
    <ligand>
        <name>Zn(2+)</name>
        <dbReference type="ChEBI" id="CHEBI:29105"/>
        <label>1</label>
    </ligand>
</feature>
<feature type="binding site" evidence="2">
    <location>
        <position position="606"/>
    </location>
    <ligand>
        <name>Zn(2+)</name>
        <dbReference type="ChEBI" id="CHEBI:29105"/>
        <label>1</label>
    </ligand>
</feature>
<feature type="binding site" evidence="2">
    <location>
        <position position="620"/>
    </location>
    <ligand>
        <name>Zn(2+)</name>
        <dbReference type="ChEBI" id="CHEBI:29105"/>
        <label>1</label>
    </ligand>
</feature>
<feature type="binding site" evidence="2">
    <location>
        <position position="623"/>
    </location>
    <ligand>
        <name>Zn(2+)</name>
        <dbReference type="ChEBI" id="CHEBI:29105"/>
        <label>1</label>
    </ligand>
</feature>
<feature type="binding site" evidence="2">
    <location>
        <position position="639"/>
    </location>
    <ligand>
        <name>Zn(2+)</name>
        <dbReference type="ChEBI" id="CHEBI:29105"/>
        <label>2</label>
    </ligand>
</feature>
<feature type="binding site" evidence="2">
    <location>
        <position position="645"/>
    </location>
    <ligand>
        <name>Zn(2+)</name>
        <dbReference type="ChEBI" id="CHEBI:29105"/>
        <label>2</label>
    </ligand>
</feature>
<feature type="binding site" evidence="2">
    <location>
        <position position="655"/>
    </location>
    <ligand>
        <name>Zn(2+)</name>
        <dbReference type="ChEBI" id="CHEBI:29105"/>
        <label>2</label>
    </ligand>
</feature>
<feature type="binding site" evidence="2">
    <location>
        <position position="658"/>
    </location>
    <ligand>
        <name>Zn(2+)</name>
        <dbReference type="ChEBI" id="CHEBI:29105"/>
        <label>2</label>
    </ligand>
</feature>
<feature type="binding site" evidence="2">
    <location>
        <position position="770"/>
    </location>
    <ligand>
        <name>21-hydroxyprogesterone</name>
        <dbReference type="ChEBI" id="CHEBI:16973"/>
    </ligand>
</feature>
<feature type="binding site" evidence="2">
    <location>
        <position position="770"/>
    </location>
    <ligand>
        <name>aldosterone</name>
        <dbReference type="ChEBI" id="CHEBI:27584"/>
    </ligand>
</feature>
<feature type="binding site" evidence="2">
    <location>
        <position position="770"/>
    </location>
    <ligand>
        <name>progesterone</name>
        <dbReference type="ChEBI" id="CHEBI:17026"/>
    </ligand>
</feature>
<feature type="binding site" evidence="2">
    <location>
        <position position="776"/>
    </location>
    <ligand>
        <name>21-hydroxyprogesterone</name>
        <dbReference type="ChEBI" id="CHEBI:16973"/>
    </ligand>
</feature>
<feature type="binding site" evidence="2">
    <location>
        <position position="776"/>
    </location>
    <ligand>
        <name>aldosterone</name>
        <dbReference type="ChEBI" id="CHEBI:27584"/>
    </ligand>
</feature>
<feature type="binding site" evidence="2">
    <location>
        <position position="776"/>
    </location>
    <ligand>
        <name>progesterone</name>
        <dbReference type="ChEBI" id="CHEBI:17026"/>
    </ligand>
</feature>
<feature type="binding site" evidence="2">
    <location>
        <position position="817"/>
    </location>
    <ligand>
        <name>21-hydroxyprogesterone</name>
        <dbReference type="ChEBI" id="CHEBI:16973"/>
    </ligand>
</feature>
<feature type="binding site" evidence="2">
    <location>
        <position position="817"/>
    </location>
    <ligand>
        <name>aldosterone</name>
        <dbReference type="ChEBI" id="CHEBI:27584"/>
    </ligand>
</feature>
<feature type="binding site" evidence="2">
    <location>
        <position position="817"/>
    </location>
    <ligand>
        <name>progesterone</name>
        <dbReference type="ChEBI" id="CHEBI:17026"/>
    </ligand>
</feature>
<feature type="binding site" evidence="2">
    <location>
        <position position="945"/>
    </location>
    <ligand>
        <name>21-hydroxyprogesterone</name>
        <dbReference type="ChEBI" id="CHEBI:16973"/>
    </ligand>
</feature>
<feature type="binding site" evidence="2">
    <location>
        <position position="945"/>
    </location>
    <ligand>
        <name>aldosterone</name>
        <dbReference type="ChEBI" id="CHEBI:27584"/>
    </ligand>
</feature>
<feature type="binding site" evidence="2">
    <location>
        <position position="945"/>
    </location>
    <ligand>
        <name>progesterone</name>
        <dbReference type="ChEBI" id="CHEBI:17026"/>
    </ligand>
</feature>
<feature type="modified residue" description="Phosphoserine" evidence="3">
    <location>
        <position position="250"/>
    </location>
</feature>
<feature type="modified residue" description="Phosphoserine" evidence="3">
    <location>
        <position position="259"/>
    </location>
</feature>
<feature type="modified residue" description="Phosphoserine" evidence="3">
    <location>
        <position position="283"/>
    </location>
</feature>
<feature type="modified residue" description="Phosphoserine" evidence="3">
    <location>
        <position position="287"/>
    </location>
</feature>
<feature type="modified residue" description="Phosphoserine" evidence="3">
    <location>
        <position position="299"/>
    </location>
</feature>
<reference key="1">
    <citation type="journal article" date="2006" name="Comp. Med.">
        <title>Cortisol metabolism in the Bolivian squirrel monkey (Saimiri boliviensis boliviensis).</title>
        <authorList>
            <person name="Scammell J.G."/>
            <person name="Westberry J.M."/>
            <person name="Sadosky P.W."/>
            <person name="Hubler T.R."/>
            <person name="Williams L.E."/>
            <person name="Gibson S.V."/>
            <person name="Singh R.J."/>
            <person name="Taylor R.L."/>
            <person name="Shackleton C.H."/>
        </authorList>
    </citation>
    <scope>NUCLEOTIDE SEQUENCE [MRNA]</scope>
</reference>
<proteinExistence type="evidence at transcript level"/>
<accession>Q3YC04</accession>
<gene>
    <name type="primary">NR3C2</name>
    <name type="synonym">MCR</name>
</gene>
<dbReference type="EMBL" id="DQ143871">
    <property type="protein sequence ID" value="AAZ73615.1"/>
    <property type="molecule type" value="mRNA"/>
</dbReference>
<dbReference type="RefSeq" id="NP_001295448.1">
    <property type="nucleotide sequence ID" value="NM_001308519.1"/>
</dbReference>
<dbReference type="RefSeq" id="XP_012325473.1">
    <property type="nucleotide sequence ID" value="XM_012470050.2"/>
</dbReference>
<dbReference type="SMR" id="Q3YC04"/>
<dbReference type="STRING" id="37293.ENSANAP00000006034"/>
<dbReference type="Ensembl" id="ENSANAT00000023798.1">
    <property type="protein sequence ID" value="ENSANAP00000006034.1"/>
    <property type="gene ID" value="ENSANAG00000021076.1"/>
</dbReference>
<dbReference type="GeneID" id="105729343"/>
<dbReference type="KEGG" id="anan:105729343"/>
<dbReference type="CTD" id="4306"/>
<dbReference type="GeneTree" id="ENSGT00940000159333"/>
<dbReference type="OrthoDB" id="5789523at2759"/>
<dbReference type="Proteomes" id="UP000233020">
    <property type="component" value="Unplaced"/>
</dbReference>
<dbReference type="GO" id="GO:0005789">
    <property type="term" value="C:endoplasmic reticulum membrane"/>
    <property type="evidence" value="ECO:0007669"/>
    <property type="project" value="UniProtKB-SubCell"/>
</dbReference>
<dbReference type="GO" id="GO:0005654">
    <property type="term" value="C:nucleoplasm"/>
    <property type="evidence" value="ECO:0007669"/>
    <property type="project" value="Ensembl"/>
</dbReference>
<dbReference type="GO" id="GO:0043235">
    <property type="term" value="C:receptor complex"/>
    <property type="evidence" value="ECO:0007669"/>
    <property type="project" value="Ensembl"/>
</dbReference>
<dbReference type="GO" id="GO:0003700">
    <property type="term" value="F:DNA-binding transcription factor activity"/>
    <property type="evidence" value="ECO:0007669"/>
    <property type="project" value="InterPro"/>
</dbReference>
<dbReference type="GO" id="GO:1990837">
    <property type="term" value="F:sequence-specific double-stranded DNA binding"/>
    <property type="evidence" value="ECO:0007669"/>
    <property type="project" value="Ensembl"/>
</dbReference>
<dbReference type="GO" id="GO:0005496">
    <property type="term" value="F:steroid binding"/>
    <property type="evidence" value="ECO:0007669"/>
    <property type="project" value="UniProtKB-KW"/>
</dbReference>
<dbReference type="GO" id="GO:0017025">
    <property type="term" value="F:TBP-class protein binding"/>
    <property type="evidence" value="ECO:0007669"/>
    <property type="project" value="Ensembl"/>
</dbReference>
<dbReference type="GO" id="GO:0008270">
    <property type="term" value="F:zinc ion binding"/>
    <property type="evidence" value="ECO:0007669"/>
    <property type="project" value="UniProtKB-KW"/>
</dbReference>
<dbReference type="GO" id="GO:1901224">
    <property type="term" value="P:positive regulation of non-canonical NF-kappaB signal transduction"/>
    <property type="evidence" value="ECO:0007669"/>
    <property type="project" value="Ensembl"/>
</dbReference>
<dbReference type="CDD" id="cd07172">
    <property type="entry name" value="NR_DBD_GR_PR"/>
    <property type="match status" value="1"/>
</dbReference>
<dbReference type="CDD" id="cd07075">
    <property type="entry name" value="NR_LBD_MR"/>
    <property type="match status" value="1"/>
</dbReference>
<dbReference type="FunFam" id="1.10.565.10:FF:000004">
    <property type="entry name" value="Androgen receptor variant"/>
    <property type="match status" value="1"/>
</dbReference>
<dbReference type="FunFam" id="3.30.50.10:FF:000029">
    <property type="entry name" value="mineralocorticoid receptor isoform X1"/>
    <property type="match status" value="1"/>
</dbReference>
<dbReference type="Gene3D" id="3.30.50.10">
    <property type="entry name" value="Erythroid Transcription Factor GATA-1, subunit A"/>
    <property type="match status" value="1"/>
</dbReference>
<dbReference type="Gene3D" id="1.10.565.10">
    <property type="entry name" value="Retinoid X Receptor"/>
    <property type="match status" value="1"/>
</dbReference>
<dbReference type="InterPro" id="IPR035500">
    <property type="entry name" value="NHR-like_dom_sf"/>
</dbReference>
<dbReference type="InterPro" id="IPR000536">
    <property type="entry name" value="Nucl_hrmn_rcpt_lig-bd"/>
</dbReference>
<dbReference type="InterPro" id="IPR050200">
    <property type="entry name" value="Nuclear_hormone_rcpt_NR3"/>
</dbReference>
<dbReference type="InterPro" id="IPR001628">
    <property type="entry name" value="Znf_hrmn_rcpt"/>
</dbReference>
<dbReference type="InterPro" id="IPR013088">
    <property type="entry name" value="Znf_NHR/GATA"/>
</dbReference>
<dbReference type="PANTHER" id="PTHR48092">
    <property type="entry name" value="KNIRPS-RELATED PROTEIN-RELATED"/>
    <property type="match status" value="1"/>
</dbReference>
<dbReference type="Pfam" id="PF00104">
    <property type="entry name" value="Hormone_recep"/>
    <property type="match status" value="1"/>
</dbReference>
<dbReference type="Pfam" id="PF00105">
    <property type="entry name" value="zf-C4"/>
    <property type="match status" value="1"/>
</dbReference>
<dbReference type="PRINTS" id="PR00047">
    <property type="entry name" value="STROIDFINGER"/>
</dbReference>
<dbReference type="SMART" id="SM00430">
    <property type="entry name" value="HOLI"/>
    <property type="match status" value="1"/>
</dbReference>
<dbReference type="SMART" id="SM00399">
    <property type="entry name" value="ZnF_C4"/>
    <property type="match status" value="1"/>
</dbReference>
<dbReference type="SUPFAM" id="SSF57716">
    <property type="entry name" value="Glucocorticoid receptor-like (DNA-binding domain)"/>
    <property type="match status" value="1"/>
</dbReference>
<dbReference type="SUPFAM" id="SSF48508">
    <property type="entry name" value="Nuclear receptor ligand-binding domain"/>
    <property type="match status" value="1"/>
</dbReference>
<dbReference type="PROSITE" id="PS51843">
    <property type="entry name" value="NR_LBD"/>
    <property type="match status" value="1"/>
</dbReference>
<dbReference type="PROSITE" id="PS00031">
    <property type="entry name" value="NUCLEAR_REC_DBD_1"/>
    <property type="match status" value="1"/>
</dbReference>
<dbReference type="PROSITE" id="PS51030">
    <property type="entry name" value="NUCLEAR_REC_DBD_2"/>
    <property type="match status" value="1"/>
</dbReference>
<comment type="function">
    <text evidence="1">Receptor for both mineralocorticoids (MC) such as aldosterone and glucocorticoids (GC) such as corticosterone or cortisol. Binds to mineralocorticoid response elements (MRE) and transactivates target genes. The effect of MC is to increase ion and water transport and thus raise extracellular fluid volume and blood pressure and lower potassium levels (By similarity).</text>
</comment>
<comment type="subunit">
    <text evidence="1">Heteromultimeric cytoplasmic complex with HSP90, HSP70, and FKBP4, in the absence of ligand. After ligand binding, it translocates to the nucleus and binds to DNA as a homodimer and as a heterodimer with NR3C1. Binds the coactivator NCOA2 (By similarity). May interact with HSD11B2 in the absence of ligand. Binds the coactivators NCOA1, TIF1 and NRIP1 (By similarity).</text>
</comment>
<comment type="subcellular location">
    <subcellularLocation>
        <location>Cytoplasm</location>
    </subcellularLocation>
    <subcellularLocation>
        <location>Nucleus</location>
    </subcellularLocation>
    <subcellularLocation>
        <location>Endoplasmic reticulum membrane</location>
        <topology>Peripheral membrane protein</topology>
    </subcellularLocation>
    <text evidence="1">Cytoplasmic and nuclear in the absence of ligand, nuclear after ligand-binding. When bound to HSD11B2, it is found associated with the endoplasmic reticulum membrane (By similarity).</text>
</comment>
<comment type="domain">
    <text>Composed of three domains: a modulating N-terminal domain, a DNA-binding domain and a C-terminal ligand-binding domain.</text>
</comment>
<comment type="PTM">
    <text evidence="1">Phosphorylated.</text>
</comment>
<comment type="similarity">
    <text evidence="7">Belongs to the nuclear hormone receptor family. NR3 subfamily.</text>
</comment>
<evidence type="ECO:0000250" key="1"/>
<evidence type="ECO:0000250" key="2">
    <source>
        <dbReference type="UniProtKB" id="P08235"/>
    </source>
</evidence>
<evidence type="ECO:0000250" key="3">
    <source>
        <dbReference type="UniProtKB" id="Q8VII8"/>
    </source>
</evidence>
<evidence type="ECO:0000255" key="4">
    <source>
        <dbReference type="PROSITE-ProRule" id="PRU00407"/>
    </source>
</evidence>
<evidence type="ECO:0000255" key="5">
    <source>
        <dbReference type="PROSITE-ProRule" id="PRU01189"/>
    </source>
</evidence>
<evidence type="ECO:0000256" key="6">
    <source>
        <dbReference type="SAM" id="MobiDB-lite"/>
    </source>
</evidence>
<evidence type="ECO:0000305" key="7"/>